<feature type="signal peptide" evidence="2">
    <location>
        <begin position="1"/>
        <end position="24"/>
    </location>
</feature>
<feature type="peptide" id="PRO_0000020906" description="CAMPATH-1 antigen">
    <location>
        <begin position="25"/>
        <end position="35"/>
    </location>
</feature>
<feature type="propeptide" id="PRO_0000020907" description="Removed in mature form" evidence="2">
    <location>
        <begin position="36"/>
        <end position="60"/>
    </location>
</feature>
<feature type="lipid moiety-binding region" description="GPI-anchor amidated serine" evidence="1">
    <location>
        <position position="35"/>
    </location>
</feature>
<feature type="glycosylation site" description="N-linked (GlcNAc...) asparagine" evidence="2">
    <location>
        <position position="27"/>
    </location>
</feature>
<feature type="glycosylation site" description="N-linked (GlcNAc...) asparagine" evidence="2">
    <location>
        <position position="39"/>
    </location>
</feature>
<reference key="1">
    <citation type="journal article" date="1992" name="Biochim. Biophys. Acta">
        <title>Identification of an abundant monkey epididymal transcript encoding a homologue of human CAMPATH-1 antigen precursor.</title>
        <authorList>
            <person name="Perry A.C.F."/>
            <person name="Jones R."/>
            <person name="Hall L."/>
        </authorList>
    </citation>
    <scope>NUCLEOTIDE SEQUENCE [MRNA]</scope>
    <source>
        <tissue>Epididymis</tissue>
    </source>
</reference>
<accession>P32763</accession>
<comment type="function">
    <text>May play a role in carrying and orienting carbohydrate, as well as having a more specific role.</text>
</comment>
<comment type="subcellular location">
    <subcellularLocation>
        <location>Cell membrane</location>
        <topology>Lipid-anchor</topology>
        <topology>GPI-anchor</topology>
    </subcellularLocation>
</comment>
<evidence type="ECO:0000250" key="1"/>
<evidence type="ECO:0000255" key="2"/>
<keyword id="KW-1003">Cell membrane</keyword>
<keyword id="KW-0325">Glycoprotein</keyword>
<keyword id="KW-0336">GPI-anchor</keyword>
<keyword id="KW-0449">Lipoprotein</keyword>
<keyword id="KW-0472">Membrane</keyword>
<keyword id="KW-1185">Reference proteome</keyword>
<keyword id="KW-0732">Signal</keyword>
<sequence>MKRFLFLLLTISLLVMVQIQTGVTSQNATSQSSPSASSNLSGGGFLFFVANAIIHLFYFS</sequence>
<proteinExistence type="inferred from homology"/>
<name>CD52_MACFA</name>
<dbReference type="EMBL" id="X67495">
    <property type="protein sequence ID" value="CAA47833.1"/>
    <property type="molecule type" value="mRNA"/>
</dbReference>
<dbReference type="PIR" id="S27152">
    <property type="entry name" value="S27152"/>
</dbReference>
<dbReference type="RefSeq" id="XP_005544396.1">
    <property type="nucleotide sequence ID" value="XM_005544339.2"/>
</dbReference>
<dbReference type="SMR" id="P32763"/>
<dbReference type="STRING" id="9541.ENSMFAP00000028698"/>
<dbReference type="GlyCosmos" id="P32763">
    <property type="glycosylation" value="2 sites, No reported glycans"/>
</dbReference>
<dbReference type="Ensembl" id="ENSMFAT00000002889.2">
    <property type="protein sequence ID" value="ENSMFAP00000028698.1"/>
    <property type="gene ID" value="ENSMFAG00000041646.2"/>
</dbReference>
<dbReference type="GeneID" id="102144354"/>
<dbReference type="KEGG" id="mcf:102144354"/>
<dbReference type="CTD" id="1043"/>
<dbReference type="VEuPathDB" id="HostDB:ENSMFAG00000041646"/>
<dbReference type="eggNOG" id="ENOG502RR9C">
    <property type="taxonomic scope" value="Eukaryota"/>
</dbReference>
<dbReference type="GeneTree" id="ENSGT00860000134004"/>
<dbReference type="OMA" id="FANTLMC"/>
<dbReference type="Proteomes" id="UP000233100">
    <property type="component" value="Chromosome 1"/>
</dbReference>
<dbReference type="Bgee" id="ENSMFAG00000041646">
    <property type="expression patterns" value="Expressed in bone marrow and 13 other cell types or tissues"/>
</dbReference>
<dbReference type="GO" id="GO:0005886">
    <property type="term" value="C:plasma membrane"/>
    <property type="evidence" value="ECO:0007669"/>
    <property type="project" value="UniProtKB-SubCell"/>
</dbReference>
<dbReference type="GO" id="GO:0098552">
    <property type="term" value="C:side of membrane"/>
    <property type="evidence" value="ECO:0007669"/>
    <property type="project" value="UniProtKB-KW"/>
</dbReference>
<dbReference type="GO" id="GO:0097225">
    <property type="term" value="C:sperm midpiece"/>
    <property type="evidence" value="ECO:0007669"/>
    <property type="project" value="TreeGrafter"/>
</dbReference>
<dbReference type="GO" id="GO:0007204">
    <property type="term" value="P:positive regulation of cytosolic calcium ion concentration"/>
    <property type="evidence" value="ECO:0007669"/>
    <property type="project" value="Ensembl"/>
</dbReference>
<dbReference type="InterPro" id="IPR026643">
    <property type="entry name" value="CAMPATH-1"/>
</dbReference>
<dbReference type="PANTHER" id="PTHR15029">
    <property type="entry name" value="CAMPATH-1 ANTIGEN"/>
    <property type="match status" value="1"/>
</dbReference>
<dbReference type="PANTHER" id="PTHR15029:SF0">
    <property type="entry name" value="CAMPATH-1 ANTIGEN"/>
    <property type="match status" value="1"/>
</dbReference>
<dbReference type="Pfam" id="PF15116">
    <property type="entry name" value="CD52"/>
    <property type="match status" value="1"/>
</dbReference>
<organism>
    <name type="scientific">Macaca fascicularis</name>
    <name type="common">Crab-eating macaque</name>
    <name type="synonym">Cynomolgus monkey</name>
    <dbReference type="NCBI Taxonomy" id="9541"/>
    <lineage>
        <taxon>Eukaryota</taxon>
        <taxon>Metazoa</taxon>
        <taxon>Chordata</taxon>
        <taxon>Craniata</taxon>
        <taxon>Vertebrata</taxon>
        <taxon>Euteleostomi</taxon>
        <taxon>Mammalia</taxon>
        <taxon>Eutheria</taxon>
        <taxon>Euarchontoglires</taxon>
        <taxon>Primates</taxon>
        <taxon>Haplorrhini</taxon>
        <taxon>Catarrhini</taxon>
        <taxon>Cercopithecidae</taxon>
        <taxon>Cercopithecinae</taxon>
        <taxon>Macaca</taxon>
    </lineage>
</organism>
<gene>
    <name type="primary">CD52</name>
    <name type="synonym">CDW52</name>
</gene>
<protein>
    <recommendedName>
        <fullName>CAMPATH-1 antigen</fullName>
    </recommendedName>
    <alternativeName>
        <fullName>Cambridge pathology 1 antigen</fullName>
    </alternativeName>
    <cdAntigenName>CD52</cdAntigenName>
</protein>